<feature type="chain" id="PRO_1000096686" description="DNA mismatch repair protein MutL">
    <location>
        <begin position="1"/>
        <end position="618"/>
    </location>
</feature>
<feature type="region of interest" description="Disordered" evidence="2">
    <location>
        <begin position="366"/>
        <end position="403"/>
    </location>
</feature>
<feature type="compositionally biased region" description="Low complexity" evidence="2">
    <location>
        <begin position="366"/>
        <end position="381"/>
    </location>
</feature>
<feature type="compositionally biased region" description="Gly residues" evidence="2">
    <location>
        <begin position="382"/>
        <end position="392"/>
    </location>
</feature>
<evidence type="ECO:0000255" key="1">
    <source>
        <dbReference type="HAMAP-Rule" id="MF_00149"/>
    </source>
</evidence>
<evidence type="ECO:0000256" key="2">
    <source>
        <dbReference type="SAM" id="MobiDB-lite"/>
    </source>
</evidence>
<dbReference type="EMBL" id="CP001127">
    <property type="protein sequence ID" value="ACF89520.1"/>
    <property type="molecule type" value="Genomic_DNA"/>
</dbReference>
<dbReference type="RefSeq" id="WP_001122541.1">
    <property type="nucleotide sequence ID" value="NC_011094.1"/>
</dbReference>
<dbReference type="SMR" id="B4TSF0"/>
<dbReference type="KEGG" id="sew:SeSA_A4627"/>
<dbReference type="HOGENOM" id="CLU_004131_5_1_6"/>
<dbReference type="Proteomes" id="UP000001865">
    <property type="component" value="Chromosome"/>
</dbReference>
<dbReference type="GO" id="GO:0032300">
    <property type="term" value="C:mismatch repair complex"/>
    <property type="evidence" value="ECO:0007669"/>
    <property type="project" value="InterPro"/>
</dbReference>
<dbReference type="GO" id="GO:0005524">
    <property type="term" value="F:ATP binding"/>
    <property type="evidence" value="ECO:0007669"/>
    <property type="project" value="InterPro"/>
</dbReference>
<dbReference type="GO" id="GO:0016887">
    <property type="term" value="F:ATP hydrolysis activity"/>
    <property type="evidence" value="ECO:0007669"/>
    <property type="project" value="InterPro"/>
</dbReference>
<dbReference type="GO" id="GO:0140664">
    <property type="term" value="F:ATP-dependent DNA damage sensor activity"/>
    <property type="evidence" value="ECO:0007669"/>
    <property type="project" value="InterPro"/>
</dbReference>
<dbReference type="GO" id="GO:0030983">
    <property type="term" value="F:mismatched DNA binding"/>
    <property type="evidence" value="ECO:0007669"/>
    <property type="project" value="InterPro"/>
</dbReference>
<dbReference type="GO" id="GO:0006298">
    <property type="term" value="P:mismatch repair"/>
    <property type="evidence" value="ECO:0007669"/>
    <property type="project" value="UniProtKB-UniRule"/>
</dbReference>
<dbReference type="CDD" id="cd16926">
    <property type="entry name" value="HATPase_MutL-MLH-PMS-like"/>
    <property type="match status" value="1"/>
</dbReference>
<dbReference type="CDD" id="cd03482">
    <property type="entry name" value="MutL_Trans_MutL"/>
    <property type="match status" value="1"/>
</dbReference>
<dbReference type="FunFam" id="3.30.230.10:FF:000013">
    <property type="entry name" value="DNA mismatch repair endonuclease MutL"/>
    <property type="match status" value="1"/>
</dbReference>
<dbReference type="FunFam" id="3.30.565.10:FF:000003">
    <property type="entry name" value="DNA mismatch repair endonuclease MutL"/>
    <property type="match status" value="1"/>
</dbReference>
<dbReference type="FunFam" id="3.30.1370.100:FF:000002">
    <property type="entry name" value="DNA mismatch repair protein MutL"/>
    <property type="match status" value="1"/>
</dbReference>
<dbReference type="Gene3D" id="3.30.230.10">
    <property type="match status" value="1"/>
</dbReference>
<dbReference type="Gene3D" id="3.30.565.10">
    <property type="entry name" value="Histidine kinase-like ATPase, C-terminal domain"/>
    <property type="match status" value="1"/>
</dbReference>
<dbReference type="Gene3D" id="3.30.1540.20">
    <property type="entry name" value="MutL, C-terminal domain, dimerisation subdomain"/>
    <property type="match status" value="1"/>
</dbReference>
<dbReference type="Gene3D" id="3.30.1370.100">
    <property type="entry name" value="MutL, C-terminal domain, regulatory subdomain"/>
    <property type="match status" value="1"/>
</dbReference>
<dbReference type="HAMAP" id="MF_00149">
    <property type="entry name" value="DNA_mis_repair"/>
    <property type="match status" value="1"/>
</dbReference>
<dbReference type="InterPro" id="IPR014762">
    <property type="entry name" value="DNA_mismatch_repair_CS"/>
</dbReference>
<dbReference type="InterPro" id="IPR020667">
    <property type="entry name" value="DNA_mismatch_repair_MutL"/>
</dbReference>
<dbReference type="InterPro" id="IPR013507">
    <property type="entry name" value="DNA_mismatch_S5_2-like"/>
</dbReference>
<dbReference type="InterPro" id="IPR036890">
    <property type="entry name" value="HATPase_C_sf"/>
</dbReference>
<dbReference type="InterPro" id="IPR002099">
    <property type="entry name" value="MutL/Mlh/PMS"/>
</dbReference>
<dbReference type="InterPro" id="IPR038973">
    <property type="entry name" value="MutL/Mlh/Pms-like"/>
</dbReference>
<dbReference type="InterPro" id="IPR014790">
    <property type="entry name" value="MutL_C"/>
</dbReference>
<dbReference type="InterPro" id="IPR042120">
    <property type="entry name" value="MutL_C_dimsub"/>
</dbReference>
<dbReference type="InterPro" id="IPR042121">
    <property type="entry name" value="MutL_C_regsub"/>
</dbReference>
<dbReference type="InterPro" id="IPR037198">
    <property type="entry name" value="MutL_C_sf"/>
</dbReference>
<dbReference type="InterPro" id="IPR020568">
    <property type="entry name" value="Ribosomal_Su5_D2-typ_SF"/>
</dbReference>
<dbReference type="InterPro" id="IPR014721">
    <property type="entry name" value="Ribsml_uS5_D2-typ_fold_subgr"/>
</dbReference>
<dbReference type="NCBIfam" id="TIGR00585">
    <property type="entry name" value="mutl"/>
    <property type="match status" value="1"/>
</dbReference>
<dbReference type="NCBIfam" id="NF000948">
    <property type="entry name" value="PRK00095.1-1"/>
    <property type="match status" value="1"/>
</dbReference>
<dbReference type="PANTHER" id="PTHR10073">
    <property type="entry name" value="DNA MISMATCH REPAIR PROTEIN MLH, PMS, MUTL"/>
    <property type="match status" value="1"/>
</dbReference>
<dbReference type="PANTHER" id="PTHR10073:SF12">
    <property type="entry name" value="DNA MISMATCH REPAIR PROTEIN MLH1"/>
    <property type="match status" value="1"/>
</dbReference>
<dbReference type="Pfam" id="PF01119">
    <property type="entry name" value="DNA_mis_repair"/>
    <property type="match status" value="1"/>
</dbReference>
<dbReference type="Pfam" id="PF13589">
    <property type="entry name" value="HATPase_c_3"/>
    <property type="match status" value="1"/>
</dbReference>
<dbReference type="Pfam" id="PF08676">
    <property type="entry name" value="MutL_C"/>
    <property type="match status" value="1"/>
</dbReference>
<dbReference type="SMART" id="SM01340">
    <property type="entry name" value="DNA_mis_repair"/>
    <property type="match status" value="1"/>
</dbReference>
<dbReference type="SMART" id="SM00853">
    <property type="entry name" value="MutL_C"/>
    <property type="match status" value="1"/>
</dbReference>
<dbReference type="SUPFAM" id="SSF55874">
    <property type="entry name" value="ATPase domain of HSP90 chaperone/DNA topoisomerase II/histidine kinase"/>
    <property type="match status" value="1"/>
</dbReference>
<dbReference type="SUPFAM" id="SSF118116">
    <property type="entry name" value="DNA mismatch repair protein MutL"/>
    <property type="match status" value="1"/>
</dbReference>
<dbReference type="SUPFAM" id="SSF54211">
    <property type="entry name" value="Ribosomal protein S5 domain 2-like"/>
    <property type="match status" value="1"/>
</dbReference>
<dbReference type="PROSITE" id="PS00058">
    <property type="entry name" value="DNA_MISMATCH_REPAIR_1"/>
    <property type="match status" value="1"/>
</dbReference>
<name>MUTL_SALSV</name>
<sequence>MPIQVLPPQLANQIAAGEVVERPASVVKELVENSLDAGATRVDIDIERGGAKLIRIRDNGCGIKKEELALALARHATSKIASLDDLEAIISLGFRGEALASISSVSRLTLTSRTAEQAEAWQAYAEGRDMDVTVKPAAHPVGTTLEVLDLFYNTPARRKFMRTEKTEFNHIDEIIRRIALARFDVTLNLSHNGKLVRQYRAVAKDGQKERRLGAICGTPFLEQALAIEWQHGDLTLRGWVADPNHTTTALTEIQYCYVNGRMMRDRLINHAIRQACEDKLGADQQPAFVLYLEIDPHQVDVNVHPAKHEVRFHQSRLVHDFIYQGVLSVLQQQTETTLPLEDIAPAPRHVPENRIAAGRNHFAVPAEPTAAREPATPRYSGGASGGNGGRQSAGGWPHAQPGYQKQQGEVYRTLLQTPATSPAPEPVAPALDGHSQSFGRVLTIVGGDCALLEHAGTIQLLSLPVAERWLRQAQLTPGQSPVCAQPLLIPLRLKVSADEKVALQKAQSLLGELGIEFQSDAQHVTIRAVPLPLRQQNLQILIPELIGYLAQQTTFATVNIAQWIARNVQSEHPQWSMAQAISLLADVERLCPQLVKAPPGGLLQPVDLHSAMNALKHE</sequence>
<gene>
    <name evidence="1" type="primary">mutL</name>
    <name type="ordered locus">SeSA_A4627</name>
</gene>
<reference key="1">
    <citation type="journal article" date="2011" name="J. Bacteriol.">
        <title>Comparative genomics of 28 Salmonella enterica isolates: evidence for CRISPR-mediated adaptive sublineage evolution.</title>
        <authorList>
            <person name="Fricke W.F."/>
            <person name="Mammel M.K."/>
            <person name="McDermott P.F."/>
            <person name="Tartera C."/>
            <person name="White D.G."/>
            <person name="Leclerc J.E."/>
            <person name="Ravel J."/>
            <person name="Cebula T.A."/>
        </authorList>
    </citation>
    <scope>NUCLEOTIDE SEQUENCE [LARGE SCALE GENOMIC DNA]</scope>
    <source>
        <strain>CVM19633</strain>
    </source>
</reference>
<keyword id="KW-0227">DNA damage</keyword>
<keyword id="KW-0234">DNA repair</keyword>
<organism>
    <name type="scientific">Salmonella schwarzengrund (strain CVM19633)</name>
    <dbReference type="NCBI Taxonomy" id="439843"/>
    <lineage>
        <taxon>Bacteria</taxon>
        <taxon>Pseudomonadati</taxon>
        <taxon>Pseudomonadota</taxon>
        <taxon>Gammaproteobacteria</taxon>
        <taxon>Enterobacterales</taxon>
        <taxon>Enterobacteriaceae</taxon>
        <taxon>Salmonella</taxon>
    </lineage>
</organism>
<proteinExistence type="inferred from homology"/>
<protein>
    <recommendedName>
        <fullName evidence="1">DNA mismatch repair protein MutL</fullName>
    </recommendedName>
</protein>
<accession>B4TSF0</accession>
<comment type="function">
    <text evidence="1">This protein is involved in the repair of mismatches in DNA. It is required for dam-dependent methyl-directed DNA mismatch repair. May act as a 'molecular matchmaker', a protein that promotes the formation of a stable complex between two or more DNA-binding proteins in an ATP-dependent manner without itself being part of a final effector complex.</text>
</comment>
<comment type="similarity">
    <text evidence="1">Belongs to the DNA mismatch repair MutL/HexB family.</text>
</comment>